<organism>
    <name type="scientific">Bacillus sp. (strain F5)</name>
    <dbReference type="NCBI Taxonomy" id="268806"/>
    <lineage>
        <taxon>Bacteria</taxon>
        <taxon>Bacillati</taxon>
        <taxon>Bacillota</taxon>
        <taxon>Bacilli</taxon>
        <taxon>Bacillales</taxon>
        <taxon>Bacillaceae</taxon>
        <taxon>Bacillus</taxon>
    </lineage>
</organism>
<gene>
    <name type="primary">malL</name>
</gene>
<keyword id="KW-0963">Cytoplasm</keyword>
<keyword id="KW-0903">Direct protein sequencing</keyword>
<keyword id="KW-0326">Glycosidase</keyword>
<keyword id="KW-0378">Hydrolase</keyword>
<name>O16G_BACF5</name>
<proteinExistence type="evidence at protein level"/>
<protein>
    <recommendedName>
        <fullName>Oligo-1,6-glucosidase</fullName>
        <ecNumber>3.2.1.10</ecNumber>
    </recommendedName>
    <alternativeName>
        <fullName>Dextrin 6-alpha-D-glucanohydrolase</fullName>
    </alternativeName>
    <alternativeName>
        <fullName>Oligosaccharide alpha-1,6-glucosidase</fullName>
    </alternativeName>
    <alternativeName>
        <fullName>Sucrase-isomaltase</fullName>
        <shortName>Isomaltase</shortName>
    </alternativeName>
</protein>
<sequence length="509" mass="59909">MSQWWKEAVVYQIYPRSFYDSNGDGFGDLQGVIQKLDYIKRLGADVIWLCPVFDSPQDDNGYDISDYRSIYEKFGTNDDMFQLIDEVHKRGMKIIMDLVVNHSSDEHAWFAESRKSKDNPYRDYYFWKDPKADGSEPNNWGAIFSGPAWSAMSTAQYYLHYFSKKQPDLNWENEAVRREVYDLMTFWMDRGVDGWRMDVIGSISKFVDFPDYETDDSRPYVVGRYHSNGPRLHEFIQEMNREVLSRYDCMTVGEAGGSDVEEAKKYTDPSRHELNMIFTFEHMDIDTKQHSPNGKWQMKPFDPIALKKTMTRWQTALMNVGWNTLYFENHDQPRVISAGAMTRELRKQSRQSISNSSARHEGNPFIYQGEEIGMTNSEMPLEMYDDLEIKNAYRELVIENKTMTEEDFRKAVAKKGRDHARTPMQWDDGKYAGFTDGEAWLAVNPRYQEINVKESLADEDSIFYYYQKLIGLRKQNKVIVYGDYRLLLEEDPRIFAYIREYRGEKLLVP</sequence>
<dbReference type="EC" id="3.2.1.10"/>
<dbReference type="EMBL" id="D00638">
    <property type="protein sequence ID" value="BAA00534.1"/>
    <property type="molecule type" value="Genomic_DNA"/>
</dbReference>
<dbReference type="PIR" id="JQ0535">
    <property type="entry name" value="JQ0535"/>
</dbReference>
<dbReference type="SMR" id="P29093"/>
<dbReference type="CAZy" id="GH13">
    <property type="family name" value="Glycoside Hydrolase Family 13"/>
</dbReference>
<dbReference type="GO" id="GO:0005737">
    <property type="term" value="C:cytoplasm"/>
    <property type="evidence" value="ECO:0007669"/>
    <property type="project" value="UniProtKB-SubCell"/>
</dbReference>
<dbReference type="GO" id="GO:0004556">
    <property type="term" value="F:alpha-amylase activity"/>
    <property type="evidence" value="ECO:0007669"/>
    <property type="project" value="TreeGrafter"/>
</dbReference>
<dbReference type="GO" id="GO:0004574">
    <property type="term" value="F:oligo-1,6-glucosidase activity"/>
    <property type="evidence" value="ECO:0007669"/>
    <property type="project" value="UniProtKB-EC"/>
</dbReference>
<dbReference type="GO" id="GO:0009313">
    <property type="term" value="P:oligosaccharide catabolic process"/>
    <property type="evidence" value="ECO:0007669"/>
    <property type="project" value="TreeGrafter"/>
</dbReference>
<dbReference type="CDD" id="cd11333">
    <property type="entry name" value="AmyAc_SI_OligoGlu_DGase"/>
    <property type="match status" value="1"/>
</dbReference>
<dbReference type="FunFam" id="3.20.20.80:FF:000064">
    <property type="entry name" value="Oligo-1,6-glucosidase"/>
    <property type="match status" value="2"/>
</dbReference>
<dbReference type="FunFam" id="3.90.400.10:FF:000002">
    <property type="entry name" value="Sucrose isomerase"/>
    <property type="match status" value="1"/>
</dbReference>
<dbReference type="Gene3D" id="3.20.20.80">
    <property type="entry name" value="Glycosidases"/>
    <property type="match status" value="1"/>
</dbReference>
<dbReference type="Gene3D" id="2.60.40.1180">
    <property type="entry name" value="Golgi alpha-mannosidase II"/>
    <property type="match status" value="1"/>
</dbReference>
<dbReference type="Gene3D" id="3.90.400.10">
    <property type="entry name" value="Oligo-1,6-glucosidase, Domain 2"/>
    <property type="match status" value="1"/>
</dbReference>
<dbReference type="InterPro" id="IPR006047">
    <property type="entry name" value="Glyco_hydro_13_cat_dom"/>
</dbReference>
<dbReference type="InterPro" id="IPR013780">
    <property type="entry name" value="Glyco_hydro_b"/>
</dbReference>
<dbReference type="InterPro" id="IPR017853">
    <property type="entry name" value="Glycoside_hydrolase_SF"/>
</dbReference>
<dbReference type="InterPro" id="IPR045857">
    <property type="entry name" value="O16G_dom_2"/>
</dbReference>
<dbReference type="NCBIfam" id="NF008183">
    <property type="entry name" value="PRK10933.1"/>
    <property type="match status" value="1"/>
</dbReference>
<dbReference type="PANTHER" id="PTHR10357">
    <property type="entry name" value="ALPHA-AMYLASE FAMILY MEMBER"/>
    <property type="match status" value="1"/>
</dbReference>
<dbReference type="PANTHER" id="PTHR10357:SF184">
    <property type="entry name" value="OLIGO-1,6-GLUCOSIDASE 1"/>
    <property type="match status" value="1"/>
</dbReference>
<dbReference type="Pfam" id="PF00128">
    <property type="entry name" value="Alpha-amylase"/>
    <property type="match status" value="1"/>
</dbReference>
<dbReference type="SMART" id="SM00642">
    <property type="entry name" value="Aamy"/>
    <property type="match status" value="1"/>
</dbReference>
<dbReference type="SUPFAM" id="SSF51445">
    <property type="entry name" value="(Trans)glycosidases"/>
    <property type="match status" value="1"/>
</dbReference>
<dbReference type="SUPFAM" id="SSF51011">
    <property type="entry name" value="Glycosyl hydrolase domain"/>
    <property type="match status" value="1"/>
</dbReference>
<reference key="1">
    <citation type="journal article" date="1990" name="Denpun Kagaku">
        <title>Nucleotide sequence of alkalophilic Bacillus oligo-1,6-glucosidase gene and the properties of the gene product in Escherichia coli HB101.</title>
        <authorList>
            <person name="Yamamoto M."/>
            <person name="Horikoshi K."/>
        </authorList>
    </citation>
    <scope>NUCLEOTIDE SEQUENCE [GENOMIC DNA]</scope>
    <scope>PROTEIN SEQUENCE OF 2-11</scope>
</reference>
<evidence type="ECO:0000250" key="1"/>
<evidence type="ECO:0000269" key="2">
    <source ref="1"/>
</evidence>
<evidence type="ECO:0000305" key="3"/>
<comment type="catalytic activity">
    <reaction>
        <text>Hydrolysis of (1-&gt;6)-alpha-D-glucosidic linkages in some oligosaccharides produced from starch and glycogen by alpha-amylase, and in isomaltose.</text>
        <dbReference type="EC" id="3.2.1.10"/>
    </reaction>
</comment>
<comment type="subcellular location">
    <subcellularLocation>
        <location>Cytoplasm</location>
    </subcellularLocation>
</comment>
<comment type="similarity">
    <text evidence="3">Belongs to the glycosyl hydrolase 13 family.</text>
</comment>
<accession>P29093</accession>
<feature type="initiator methionine" description="Removed" evidence="2">
    <location>
        <position position="1"/>
    </location>
</feature>
<feature type="chain" id="PRO_0000054316" description="Oligo-1,6-glucosidase">
    <location>
        <begin position="2"/>
        <end position="509"/>
    </location>
</feature>
<feature type="active site" description="Nucleophile" evidence="1">
    <location>
        <position position="198"/>
    </location>
</feature>
<feature type="active site" description="Proton donor" evidence="1">
    <location>
        <position position="254"/>
    </location>
</feature>
<feature type="site" description="Transition state stabilizer" evidence="1">
    <location>
        <position position="331"/>
    </location>
</feature>